<sequence length="151" mass="15984">MEVILLEQVVNLGKLGDKVAVKSGYARNYLIPQGRAVSATKENEAHFESRKAELEKAAGDKVAVAERCKQALADLGSVTIPAKAGTEGKLFGSVGAADIAEALTKAGVEIGKKEVRLPEGALRQVGEYELVIHLHPTVEAPIKVVVTGEEE</sequence>
<dbReference type="EMBL" id="CP000127">
    <property type="protein sequence ID" value="ABA56752.1"/>
    <property type="molecule type" value="Genomic_DNA"/>
</dbReference>
<dbReference type="RefSeq" id="WP_002813277.1">
    <property type="nucleotide sequence ID" value="NC_007484.1"/>
</dbReference>
<dbReference type="SMR" id="Q3JEJ4"/>
<dbReference type="FunCoup" id="Q3JEJ4">
    <property type="interactions" value="705"/>
</dbReference>
<dbReference type="STRING" id="323261.Noc_0222"/>
<dbReference type="KEGG" id="noc:Noc_0222"/>
<dbReference type="eggNOG" id="COG0359">
    <property type="taxonomic scope" value="Bacteria"/>
</dbReference>
<dbReference type="HOGENOM" id="CLU_078938_4_1_6"/>
<dbReference type="InParanoid" id="Q3JEJ4"/>
<dbReference type="Proteomes" id="UP000006838">
    <property type="component" value="Chromosome"/>
</dbReference>
<dbReference type="GO" id="GO:1990904">
    <property type="term" value="C:ribonucleoprotein complex"/>
    <property type="evidence" value="ECO:0007669"/>
    <property type="project" value="UniProtKB-KW"/>
</dbReference>
<dbReference type="GO" id="GO:0005840">
    <property type="term" value="C:ribosome"/>
    <property type="evidence" value="ECO:0007669"/>
    <property type="project" value="UniProtKB-KW"/>
</dbReference>
<dbReference type="GO" id="GO:0019843">
    <property type="term" value="F:rRNA binding"/>
    <property type="evidence" value="ECO:0007669"/>
    <property type="project" value="UniProtKB-UniRule"/>
</dbReference>
<dbReference type="GO" id="GO:0003735">
    <property type="term" value="F:structural constituent of ribosome"/>
    <property type="evidence" value="ECO:0007669"/>
    <property type="project" value="InterPro"/>
</dbReference>
<dbReference type="GO" id="GO:0006412">
    <property type="term" value="P:translation"/>
    <property type="evidence" value="ECO:0007669"/>
    <property type="project" value="UniProtKB-UniRule"/>
</dbReference>
<dbReference type="Gene3D" id="3.10.430.100">
    <property type="entry name" value="Ribosomal protein L9, C-terminal domain"/>
    <property type="match status" value="1"/>
</dbReference>
<dbReference type="Gene3D" id="3.40.5.10">
    <property type="entry name" value="Ribosomal protein L9, N-terminal domain"/>
    <property type="match status" value="1"/>
</dbReference>
<dbReference type="HAMAP" id="MF_00503">
    <property type="entry name" value="Ribosomal_bL9"/>
    <property type="match status" value="1"/>
</dbReference>
<dbReference type="InterPro" id="IPR000244">
    <property type="entry name" value="Ribosomal_bL9"/>
</dbReference>
<dbReference type="InterPro" id="IPR009027">
    <property type="entry name" value="Ribosomal_bL9/RNase_H1_N"/>
</dbReference>
<dbReference type="InterPro" id="IPR020594">
    <property type="entry name" value="Ribosomal_bL9_bac/chp"/>
</dbReference>
<dbReference type="InterPro" id="IPR020069">
    <property type="entry name" value="Ribosomal_bL9_C"/>
</dbReference>
<dbReference type="InterPro" id="IPR036791">
    <property type="entry name" value="Ribosomal_bL9_C_sf"/>
</dbReference>
<dbReference type="InterPro" id="IPR020070">
    <property type="entry name" value="Ribosomal_bL9_N"/>
</dbReference>
<dbReference type="InterPro" id="IPR036935">
    <property type="entry name" value="Ribosomal_bL9_N_sf"/>
</dbReference>
<dbReference type="NCBIfam" id="TIGR00158">
    <property type="entry name" value="L9"/>
    <property type="match status" value="1"/>
</dbReference>
<dbReference type="PANTHER" id="PTHR21368">
    <property type="entry name" value="50S RIBOSOMAL PROTEIN L9"/>
    <property type="match status" value="1"/>
</dbReference>
<dbReference type="Pfam" id="PF03948">
    <property type="entry name" value="Ribosomal_L9_C"/>
    <property type="match status" value="1"/>
</dbReference>
<dbReference type="Pfam" id="PF01281">
    <property type="entry name" value="Ribosomal_L9_N"/>
    <property type="match status" value="1"/>
</dbReference>
<dbReference type="SUPFAM" id="SSF55658">
    <property type="entry name" value="L9 N-domain-like"/>
    <property type="match status" value="1"/>
</dbReference>
<dbReference type="SUPFAM" id="SSF55653">
    <property type="entry name" value="Ribosomal protein L9 C-domain"/>
    <property type="match status" value="1"/>
</dbReference>
<dbReference type="PROSITE" id="PS00651">
    <property type="entry name" value="RIBOSOMAL_L9"/>
    <property type="match status" value="1"/>
</dbReference>
<reference key="1">
    <citation type="journal article" date="2006" name="Appl. Environ. Microbiol.">
        <title>Complete genome sequence of the marine, chemolithoautotrophic, ammonia-oxidizing bacterium Nitrosococcus oceani ATCC 19707.</title>
        <authorList>
            <person name="Klotz M.G."/>
            <person name="Arp D.J."/>
            <person name="Chain P.S.G."/>
            <person name="El-Sheikh A.F."/>
            <person name="Hauser L.J."/>
            <person name="Hommes N.G."/>
            <person name="Larimer F.W."/>
            <person name="Malfatti S.A."/>
            <person name="Norton J.M."/>
            <person name="Poret-Peterson A.T."/>
            <person name="Vergez L.M."/>
            <person name="Ward B.B."/>
        </authorList>
    </citation>
    <scope>NUCLEOTIDE SEQUENCE [LARGE SCALE GENOMIC DNA]</scope>
    <source>
        <strain>ATCC 19707 / BCRC 17464 / JCM 30415 / NCIMB 11848 / C-107</strain>
    </source>
</reference>
<protein>
    <recommendedName>
        <fullName evidence="1">Large ribosomal subunit protein bL9</fullName>
    </recommendedName>
    <alternativeName>
        <fullName evidence="2">50S ribosomal protein L9</fullName>
    </alternativeName>
</protein>
<feature type="chain" id="PRO_0000236551" description="Large ribosomal subunit protein bL9">
    <location>
        <begin position="1"/>
        <end position="151"/>
    </location>
</feature>
<proteinExistence type="inferred from homology"/>
<organism>
    <name type="scientific">Nitrosococcus oceani (strain ATCC 19707 / BCRC 17464 / JCM 30415 / NCIMB 11848 / C-107)</name>
    <dbReference type="NCBI Taxonomy" id="323261"/>
    <lineage>
        <taxon>Bacteria</taxon>
        <taxon>Pseudomonadati</taxon>
        <taxon>Pseudomonadota</taxon>
        <taxon>Gammaproteobacteria</taxon>
        <taxon>Chromatiales</taxon>
        <taxon>Chromatiaceae</taxon>
        <taxon>Nitrosococcus</taxon>
    </lineage>
</organism>
<name>RL9_NITOC</name>
<keyword id="KW-1185">Reference proteome</keyword>
<keyword id="KW-0687">Ribonucleoprotein</keyword>
<keyword id="KW-0689">Ribosomal protein</keyword>
<keyword id="KW-0694">RNA-binding</keyword>
<keyword id="KW-0699">rRNA-binding</keyword>
<accession>Q3JEJ4</accession>
<evidence type="ECO:0000255" key="1">
    <source>
        <dbReference type="HAMAP-Rule" id="MF_00503"/>
    </source>
</evidence>
<evidence type="ECO:0000305" key="2"/>
<gene>
    <name evidence="1" type="primary">rplI</name>
    <name type="ordered locus">Noc_0222</name>
</gene>
<comment type="function">
    <text evidence="1">Binds to the 23S rRNA.</text>
</comment>
<comment type="similarity">
    <text evidence="1">Belongs to the bacterial ribosomal protein bL9 family.</text>
</comment>